<proteinExistence type="inferred from homology"/>
<gene>
    <name evidence="1" type="primary">rps19</name>
</gene>
<comment type="function">
    <text evidence="1">Protein S19 forms a complex with S13 that binds strongly to the 16S ribosomal RNA.</text>
</comment>
<comment type="subcellular location">
    <subcellularLocation>
        <location>Plastid</location>
        <location>Chloroplast</location>
    </subcellularLocation>
</comment>
<comment type="similarity">
    <text evidence="1">Belongs to the universal ribosomal protein uS19 family.</text>
</comment>
<dbReference type="EMBL" id="DQ887677">
    <property type="protein sequence ID" value="ABI14512.1"/>
    <property type="molecule type" value="Genomic_DNA"/>
</dbReference>
<dbReference type="RefSeq" id="YP_784514.1">
    <property type="nucleotide sequence ID" value="NC_008457.1"/>
</dbReference>
<dbReference type="SMR" id="Q06GL9"/>
<dbReference type="GeneID" id="4363659"/>
<dbReference type="GO" id="GO:0009507">
    <property type="term" value="C:chloroplast"/>
    <property type="evidence" value="ECO:0007669"/>
    <property type="project" value="UniProtKB-SubCell"/>
</dbReference>
<dbReference type="GO" id="GO:0005763">
    <property type="term" value="C:mitochondrial small ribosomal subunit"/>
    <property type="evidence" value="ECO:0007669"/>
    <property type="project" value="TreeGrafter"/>
</dbReference>
<dbReference type="GO" id="GO:0019843">
    <property type="term" value="F:rRNA binding"/>
    <property type="evidence" value="ECO:0007669"/>
    <property type="project" value="UniProtKB-UniRule"/>
</dbReference>
<dbReference type="GO" id="GO:0003735">
    <property type="term" value="F:structural constituent of ribosome"/>
    <property type="evidence" value="ECO:0007669"/>
    <property type="project" value="InterPro"/>
</dbReference>
<dbReference type="GO" id="GO:0000028">
    <property type="term" value="P:ribosomal small subunit assembly"/>
    <property type="evidence" value="ECO:0007669"/>
    <property type="project" value="TreeGrafter"/>
</dbReference>
<dbReference type="GO" id="GO:0006412">
    <property type="term" value="P:translation"/>
    <property type="evidence" value="ECO:0007669"/>
    <property type="project" value="UniProtKB-UniRule"/>
</dbReference>
<dbReference type="FunFam" id="3.30.860.10:FF:000001">
    <property type="entry name" value="30S ribosomal protein S19"/>
    <property type="match status" value="1"/>
</dbReference>
<dbReference type="Gene3D" id="3.30.860.10">
    <property type="entry name" value="30s Ribosomal Protein S19, Chain A"/>
    <property type="match status" value="1"/>
</dbReference>
<dbReference type="HAMAP" id="MF_00531">
    <property type="entry name" value="Ribosomal_uS19"/>
    <property type="match status" value="1"/>
</dbReference>
<dbReference type="InterPro" id="IPR002222">
    <property type="entry name" value="Ribosomal_uS19"/>
</dbReference>
<dbReference type="InterPro" id="IPR005732">
    <property type="entry name" value="Ribosomal_uS19_bac-type"/>
</dbReference>
<dbReference type="InterPro" id="IPR020934">
    <property type="entry name" value="Ribosomal_uS19_CS"/>
</dbReference>
<dbReference type="InterPro" id="IPR023575">
    <property type="entry name" value="Ribosomal_uS19_SF"/>
</dbReference>
<dbReference type="NCBIfam" id="TIGR01050">
    <property type="entry name" value="rpsS_bact"/>
    <property type="match status" value="1"/>
</dbReference>
<dbReference type="PANTHER" id="PTHR11880">
    <property type="entry name" value="RIBOSOMAL PROTEIN S19P FAMILY MEMBER"/>
    <property type="match status" value="1"/>
</dbReference>
<dbReference type="PANTHER" id="PTHR11880:SF8">
    <property type="entry name" value="SMALL RIBOSOMAL SUBUNIT PROTEIN US19M"/>
    <property type="match status" value="1"/>
</dbReference>
<dbReference type="Pfam" id="PF00203">
    <property type="entry name" value="Ribosomal_S19"/>
    <property type="match status" value="1"/>
</dbReference>
<dbReference type="PIRSF" id="PIRSF002144">
    <property type="entry name" value="Ribosomal_S19"/>
    <property type="match status" value="1"/>
</dbReference>
<dbReference type="PRINTS" id="PR00975">
    <property type="entry name" value="RIBOSOMALS19"/>
</dbReference>
<dbReference type="SUPFAM" id="SSF54570">
    <property type="entry name" value="Ribosomal protein S19"/>
    <property type="match status" value="1"/>
</dbReference>
<dbReference type="PROSITE" id="PS00323">
    <property type="entry name" value="RIBOSOMAL_S19"/>
    <property type="match status" value="1"/>
</dbReference>
<evidence type="ECO:0000255" key="1">
    <source>
        <dbReference type="HAMAP-Rule" id="MF_00531"/>
    </source>
</evidence>
<evidence type="ECO:0000305" key="2"/>
<organism>
    <name type="scientific">Piper cenocladum</name>
    <name type="common">Ant piper</name>
    <dbReference type="NCBI Taxonomy" id="398741"/>
    <lineage>
        <taxon>Eukaryota</taxon>
        <taxon>Viridiplantae</taxon>
        <taxon>Streptophyta</taxon>
        <taxon>Embryophyta</taxon>
        <taxon>Tracheophyta</taxon>
        <taxon>Spermatophyta</taxon>
        <taxon>Magnoliopsida</taxon>
        <taxon>Magnoliidae</taxon>
        <taxon>Piperales</taxon>
        <taxon>Piperaceae</taxon>
        <taxon>Piper</taxon>
    </lineage>
</organism>
<geneLocation type="chloroplast"/>
<accession>Q06GL9</accession>
<reference key="1">
    <citation type="journal article" date="2006" name="BMC Evol. Biol.">
        <title>Complete plastid genome sequences of Drimys, Liriodendron, and Piper: implications for the phylogenetic relationships of magnoliids.</title>
        <authorList>
            <person name="Cai Z."/>
            <person name="Penaflor C."/>
            <person name="Kuehl J.V."/>
            <person name="Leebens-Mack J."/>
            <person name="Carlson J.E."/>
            <person name="dePamphilis C.W."/>
            <person name="Boore J.L."/>
            <person name="Jansen R.K."/>
        </authorList>
    </citation>
    <scope>NUCLEOTIDE SEQUENCE [LARGE SCALE GENOMIC DNA]</scope>
</reference>
<feature type="chain" id="PRO_0000276919" description="Small ribosomal subunit protein uS19c">
    <location>
        <begin position="1"/>
        <end position="92"/>
    </location>
</feature>
<sequence>MARSLKKSPFVANHLLKKIEKLNMKGGKEIIVTWSRASTIIPTMIGHTIAIHNGKEHLPIYITDRMVGHKLGEFAPTLTFRGHARNDNRSRR</sequence>
<keyword id="KW-0150">Chloroplast</keyword>
<keyword id="KW-0934">Plastid</keyword>
<keyword id="KW-0687">Ribonucleoprotein</keyword>
<keyword id="KW-0689">Ribosomal protein</keyword>
<keyword id="KW-0694">RNA-binding</keyword>
<keyword id="KW-0699">rRNA-binding</keyword>
<name>RR19_PIPCE</name>
<protein>
    <recommendedName>
        <fullName evidence="1">Small ribosomal subunit protein uS19c</fullName>
    </recommendedName>
    <alternativeName>
        <fullName evidence="2">30S ribosomal protein S19, chloroplastic</fullName>
    </alternativeName>
</protein>